<name>CJ120_BOVIN</name>
<sequence length="343" mass="39076">MIREWENGCPKIGKQRARDSRAQERMTTEGKLNKNGIPARVFNISDSFLNKESLSSQGDVCPASPLGIWTKFYKSDPRIALGKYSPLEKEILRLGGVHTVAARRFLTYKQEEERKMLKELQTLSADYKRVVDCRRQHTSPCATCGSLGKMWTAKVIVSPEEFRMPRRERLNVSKHIERMQLARALRSKQLLPYIERFRGSSLLPSGGLGPMARARAGEGQDDGNTDDGNDVHQKGRGEVESKTSKRQEIKMNVIFKSEEPQKCITSHPNDLKPFFPAKKAERSITGLTNRSLLHVSEFPGDLMLMNQDFLSRGIYPSYASQATRLEEENAWKEYMCKVAPHHY</sequence>
<reference key="1">
    <citation type="submission" date="2005-11" db="EMBL/GenBank/DDBJ databases">
        <authorList>
            <consortium name="NIH - Mammalian Gene Collection (MGC) project"/>
        </authorList>
    </citation>
    <scope>NUCLEOTIDE SEQUENCE [LARGE SCALE MRNA]</scope>
    <source>
        <strain>Crossbred X Angus</strain>
        <tissue>Liver</tissue>
    </source>
</reference>
<feature type="chain" id="PRO_0000285803" description="Uncharacterized protein C10orf120 homolog">
    <location>
        <begin position="1"/>
        <end position="343"/>
    </location>
</feature>
<feature type="region of interest" description="Disordered" evidence="2">
    <location>
        <begin position="1"/>
        <end position="27"/>
    </location>
</feature>
<feature type="region of interest" description="Disordered" evidence="2">
    <location>
        <begin position="205"/>
        <end position="247"/>
    </location>
</feature>
<feature type="compositionally biased region" description="Basic and acidic residues" evidence="2">
    <location>
        <begin position="16"/>
        <end position="27"/>
    </location>
</feature>
<feature type="compositionally biased region" description="Acidic residues" evidence="2">
    <location>
        <begin position="219"/>
        <end position="228"/>
    </location>
</feature>
<feature type="compositionally biased region" description="Basic and acidic residues" evidence="2">
    <location>
        <begin position="229"/>
        <end position="247"/>
    </location>
</feature>
<protein>
    <recommendedName>
        <fullName>Uncharacterized protein C10orf120 homolog</fullName>
    </recommendedName>
</protein>
<accession>Q32KT7</accession>
<proteinExistence type="evidence at transcript level"/>
<organism>
    <name type="scientific">Bos taurus</name>
    <name type="common">Bovine</name>
    <dbReference type="NCBI Taxonomy" id="9913"/>
    <lineage>
        <taxon>Eukaryota</taxon>
        <taxon>Metazoa</taxon>
        <taxon>Chordata</taxon>
        <taxon>Craniata</taxon>
        <taxon>Vertebrata</taxon>
        <taxon>Euteleostomi</taxon>
        <taxon>Mammalia</taxon>
        <taxon>Eutheria</taxon>
        <taxon>Laurasiatheria</taxon>
        <taxon>Artiodactyla</taxon>
        <taxon>Ruminantia</taxon>
        <taxon>Pecora</taxon>
        <taxon>Bovidae</taxon>
        <taxon>Bovinae</taxon>
        <taxon>Bos</taxon>
    </lineage>
</organism>
<keyword id="KW-1185">Reference proteome</keyword>
<comment type="function">
    <text evidence="1">Dispensable for normal development and fertility.</text>
</comment>
<dbReference type="EMBL" id="BC109935">
    <property type="protein sequence ID" value="AAI09936.1"/>
    <property type="molecule type" value="mRNA"/>
</dbReference>
<dbReference type="RefSeq" id="NP_001069944.1">
    <property type="nucleotide sequence ID" value="NM_001076476.2"/>
</dbReference>
<dbReference type="STRING" id="9913.ENSBTAP00000014299"/>
<dbReference type="PaxDb" id="9913-ENSBTAP00000014299"/>
<dbReference type="GeneID" id="617773"/>
<dbReference type="KEGG" id="bta:617773"/>
<dbReference type="CTD" id="617773"/>
<dbReference type="eggNOG" id="ENOG502RNK6">
    <property type="taxonomic scope" value="Eukaryota"/>
</dbReference>
<dbReference type="InParanoid" id="Q32KT7"/>
<dbReference type="OrthoDB" id="9446792at2759"/>
<dbReference type="Proteomes" id="UP000009136">
    <property type="component" value="Unplaced"/>
</dbReference>
<dbReference type="InterPro" id="IPR040721">
    <property type="entry name" value="DUF5520"/>
</dbReference>
<dbReference type="PANTHER" id="PTHR47509">
    <property type="entry name" value="MCG1612"/>
    <property type="match status" value="1"/>
</dbReference>
<dbReference type="PANTHER" id="PTHR47509:SF1">
    <property type="entry name" value="RIKEN CDNA 4933402N03 GENE"/>
    <property type="match status" value="1"/>
</dbReference>
<dbReference type="Pfam" id="PF17658">
    <property type="entry name" value="DUF5520"/>
    <property type="match status" value="1"/>
</dbReference>
<evidence type="ECO:0000250" key="1">
    <source>
        <dbReference type="UniProtKB" id="Q8CDT9"/>
    </source>
</evidence>
<evidence type="ECO:0000256" key="2">
    <source>
        <dbReference type="SAM" id="MobiDB-lite"/>
    </source>
</evidence>